<feature type="chain" id="PRO_0000085214" description="Heparan sulfate glucosamine 3-O-sulfotransferase 2">
    <location>
        <begin position="1"/>
        <end position="367"/>
    </location>
</feature>
<feature type="topological domain" description="Cytoplasmic" evidence="2">
    <location>
        <begin position="1"/>
        <end position="19"/>
    </location>
</feature>
<feature type="transmembrane region" description="Helical; Signal-anchor for type II membrane protein" evidence="2">
    <location>
        <begin position="20"/>
        <end position="39"/>
    </location>
</feature>
<feature type="topological domain" description="Lumenal" evidence="2">
    <location>
        <begin position="40"/>
        <end position="367"/>
    </location>
</feature>
<feature type="region of interest" description="Disordered" evidence="3">
    <location>
        <begin position="61"/>
        <end position="110"/>
    </location>
</feature>
<feature type="compositionally biased region" description="Low complexity" evidence="3">
    <location>
        <begin position="84"/>
        <end position="96"/>
    </location>
</feature>
<feature type="binding site" evidence="1">
    <location>
        <begin position="124"/>
        <end position="128"/>
    </location>
    <ligand>
        <name>3'-phosphoadenylyl sulfate</name>
        <dbReference type="ChEBI" id="CHEBI:58339"/>
    </ligand>
</feature>
<feature type="binding site" evidence="1">
    <location>
        <begin position="146"/>
        <end position="152"/>
    </location>
    <ligand>
        <name>substrate</name>
    </ligand>
</feature>
<feature type="binding site" evidence="1">
    <location>
        <begin position="177"/>
        <end position="180"/>
    </location>
    <ligand>
        <name>substrate</name>
    </ligand>
</feature>
<feature type="binding site" evidence="1">
    <location>
        <position position="205"/>
    </location>
    <ligand>
        <name>3'-phosphoadenylyl sulfate</name>
        <dbReference type="ChEBI" id="CHEBI:58339"/>
    </ligand>
</feature>
<feature type="binding site" evidence="1">
    <location>
        <position position="213"/>
    </location>
    <ligand>
        <name>3'-phosphoadenylyl sulfate</name>
        <dbReference type="ChEBI" id="CHEBI:58339"/>
    </ligand>
</feature>
<feature type="binding site" evidence="1">
    <location>
        <begin position="245"/>
        <end position="246"/>
    </location>
    <ligand>
        <name>substrate</name>
    </ligand>
</feature>
<feature type="binding site" evidence="1">
    <location>
        <begin position="330"/>
        <end position="334"/>
    </location>
    <ligand>
        <name>3'-phosphoadenylyl sulfate</name>
        <dbReference type="ChEBI" id="CHEBI:58339"/>
    </ligand>
</feature>
<feature type="glycosylation site" description="N-linked (GlcNAc...) asparagine" evidence="2">
    <location>
        <position position="102"/>
    </location>
</feature>
<feature type="glycosylation site" description="N-linked (GlcNAc...) asparagine" evidence="2">
    <location>
        <position position="193"/>
    </location>
</feature>
<feature type="glycosylation site" description="N-linked (GlcNAc...) asparagine" evidence="2">
    <location>
        <position position="235"/>
    </location>
</feature>
<feature type="glycosylation site" description="N-linked (GlcNAc...) asparagine" evidence="2">
    <location>
        <position position="306"/>
    </location>
</feature>
<feature type="disulfide bond" evidence="1">
    <location>
        <begin position="313"/>
        <end position="325"/>
    </location>
</feature>
<feature type="sequence variant" id="VAR_052530" description="In dbSNP:rs17725080.">
    <original>P</original>
    <variation>A</variation>
    <location>
        <position position="339"/>
    </location>
</feature>
<organism>
    <name type="scientific">Homo sapiens</name>
    <name type="common">Human</name>
    <dbReference type="NCBI Taxonomy" id="9606"/>
    <lineage>
        <taxon>Eukaryota</taxon>
        <taxon>Metazoa</taxon>
        <taxon>Chordata</taxon>
        <taxon>Craniata</taxon>
        <taxon>Vertebrata</taxon>
        <taxon>Euteleostomi</taxon>
        <taxon>Mammalia</taxon>
        <taxon>Eutheria</taxon>
        <taxon>Euarchontoglires</taxon>
        <taxon>Primates</taxon>
        <taxon>Haplorrhini</taxon>
        <taxon>Catarrhini</taxon>
        <taxon>Hominidae</taxon>
        <taxon>Homo</taxon>
    </lineage>
</organism>
<proteinExistence type="evidence at protein level"/>
<sequence length="367" mass="41501">MAYRVLGRAGPPQPRRARRLLFAFTLSLSCTYLCYSFLCCCDDLGRSRLLGAPRCLRGPSAGGQKLLQKSRPCDPSGPTPSEPSAPSAPAAAVPAPRLSGSNHSGSPKLGTKRLPQALIVGVKKGGTRAVLEFIRVHPDVRALGTEPHFFDRNYGRGLDWYRSLMPRTLESQITLEKTPSYFVTQEAPRRIFNMSRDTKLIVVVRNPVTRAISDYTQTLSKKPDIPTFEGLSFRNRTLGLVDVSWNAIRIGMYVLHLESWLQYFPLAQIHFVSGERLITDPAGEMGRVQDFLGIKRFITDKHFYFNKTKGFPCLKKTESSLLPRCLGKSKGRTHVQIDPEVIDQLREFYRPYNIKFYETVGQDFRWE</sequence>
<evidence type="ECO:0000250" key="1">
    <source>
        <dbReference type="UniProtKB" id="Q9Y663"/>
    </source>
</evidence>
<evidence type="ECO:0000255" key="2"/>
<evidence type="ECO:0000256" key="3">
    <source>
        <dbReference type="SAM" id="MobiDB-lite"/>
    </source>
</evidence>
<evidence type="ECO:0000269" key="4">
    <source>
    </source>
</evidence>
<evidence type="ECO:0000269" key="5">
    <source>
    </source>
</evidence>
<evidence type="ECO:0000303" key="6">
    <source>
    </source>
</evidence>
<evidence type="ECO:0000305" key="7"/>
<name>HS3S2_HUMAN</name>
<accession>Q9Y278</accession>
<accession>Q52LZ1</accession>
<keyword id="KW-1015">Disulfide bond</keyword>
<keyword id="KW-0325">Glycoprotein</keyword>
<keyword id="KW-0333">Golgi apparatus</keyword>
<keyword id="KW-0472">Membrane</keyword>
<keyword id="KW-1267">Proteomics identification</keyword>
<keyword id="KW-1185">Reference proteome</keyword>
<keyword id="KW-0735">Signal-anchor</keyword>
<keyword id="KW-0808">Transferase</keyword>
<keyword id="KW-0812">Transmembrane</keyword>
<keyword id="KW-1133">Transmembrane helix</keyword>
<comment type="function">
    <text evidence="5">Sulfotransferase that utilizes 3'-phospho-5'-adenylyl sulfate (PAPS) to catalyze the transfer of a sulfo group to an N-unsubstituted glucosamine linked to a 2-O-sulfo iduronic acid unit on heparan sulfate (PubMed:9988768). Catalyzes the O-sulfation of glucosamine in GlcA2S-GlcNS (PubMed:9988768). Unlike HS3ST1/3-OST-1, does not convert non-anticoagulant heparan sulfate to anticoagulant heparan sulfate (PubMed:9988768).</text>
</comment>
<comment type="catalytic activity">
    <reaction evidence="5">
        <text>alpha-D-glucosaminyl-[heparan sulfate](n) + 3'-phosphoadenylyl sulfate = 3-sulfo-alpha-D-glucosaminyl-[heparan sulfate](n) + adenosine 3',5'-bisphosphate + H(+)</text>
        <dbReference type="Rhea" id="RHEA:15461"/>
        <dbReference type="Rhea" id="RHEA-COMP:9830"/>
        <dbReference type="Rhea" id="RHEA-COMP:9831"/>
        <dbReference type="ChEBI" id="CHEBI:15378"/>
        <dbReference type="ChEBI" id="CHEBI:58339"/>
        <dbReference type="ChEBI" id="CHEBI:58343"/>
        <dbReference type="ChEBI" id="CHEBI:58388"/>
        <dbReference type="ChEBI" id="CHEBI:70975"/>
        <dbReference type="EC" id="2.8.2.29"/>
    </reaction>
</comment>
<comment type="subcellular location">
    <subcellularLocation>
        <location evidence="7">Golgi apparatus membrane</location>
        <topology evidence="7">Single-pass type II membrane protein</topology>
    </subcellularLocation>
</comment>
<comment type="tissue specificity">
    <text evidence="4">Highly expressed in the brain and weakly expressed in the heart, placenta, lung and skeletal muscle.</text>
</comment>
<comment type="similarity">
    <text evidence="7">Belongs to the sulfotransferase 1 family.</text>
</comment>
<gene>
    <name type="primary">HS3ST2</name>
    <name type="synonym">3OST2</name>
    <name type="ORF">UNQ2442/PRO5004</name>
</gene>
<protein>
    <recommendedName>
        <fullName>Heparan sulfate glucosamine 3-O-sulfotransferase 2</fullName>
        <ecNumber evidence="5">2.8.2.29</ecNumber>
    </recommendedName>
    <alternativeName>
        <fullName evidence="6">Heparan sulfate D-glucosaminyl 3-O-sulfotransferase 2</fullName>
        <shortName evidence="6">3-OST-2</shortName>
        <shortName>Heparan sulfate 3-O-sulfotransferase 2</shortName>
        <shortName>h3-OST-2</shortName>
    </alternativeName>
</protein>
<dbReference type="EC" id="2.8.2.29" evidence="5"/>
<dbReference type="EMBL" id="AF105374">
    <property type="protein sequence ID" value="AAD30206.1"/>
    <property type="molecule type" value="mRNA"/>
</dbReference>
<dbReference type="EMBL" id="AF105375">
    <property type="protein sequence ID" value="AAD30207.1"/>
    <property type="molecule type" value="mRNA"/>
</dbReference>
<dbReference type="EMBL" id="AY359095">
    <property type="protein sequence ID" value="AAQ89453.1"/>
    <property type="molecule type" value="mRNA"/>
</dbReference>
<dbReference type="EMBL" id="BC093734">
    <property type="protein sequence ID" value="AAH93734.1"/>
    <property type="molecule type" value="mRNA"/>
</dbReference>
<dbReference type="EMBL" id="BC093736">
    <property type="protein sequence ID" value="AAH93736.1"/>
    <property type="molecule type" value="mRNA"/>
</dbReference>
<dbReference type="CCDS" id="CCDS10606.1"/>
<dbReference type="RefSeq" id="NP_006034.1">
    <property type="nucleotide sequence ID" value="NM_006043.2"/>
</dbReference>
<dbReference type="SMR" id="Q9Y278"/>
<dbReference type="BioGRID" id="115281">
    <property type="interactions" value="115"/>
</dbReference>
<dbReference type="FunCoup" id="Q9Y278">
    <property type="interactions" value="223"/>
</dbReference>
<dbReference type="IntAct" id="Q9Y278">
    <property type="interactions" value="16"/>
</dbReference>
<dbReference type="STRING" id="9606.ENSP00000261374"/>
<dbReference type="GlyCosmos" id="Q9Y278">
    <property type="glycosylation" value="4 sites, No reported glycans"/>
</dbReference>
<dbReference type="GlyGen" id="Q9Y278">
    <property type="glycosylation" value="5 sites"/>
</dbReference>
<dbReference type="PhosphoSitePlus" id="Q9Y278"/>
<dbReference type="BioMuta" id="HS3ST2"/>
<dbReference type="DMDM" id="61214416"/>
<dbReference type="MassIVE" id="Q9Y278"/>
<dbReference type="PaxDb" id="9606-ENSP00000261374"/>
<dbReference type="PeptideAtlas" id="Q9Y278"/>
<dbReference type="ProteomicsDB" id="85682"/>
<dbReference type="Antibodypedia" id="2393">
    <property type="antibodies" value="95 antibodies from 16 providers"/>
</dbReference>
<dbReference type="DNASU" id="9956"/>
<dbReference type="Ensembl" id="ENST00000261374.4">
    <property type="protein sequence ID" value="ENSP00000261374.3"/>
    <property type="gene ID" value="ENSG00000122254.7"/>
</dbReference>
<dbReference type="GeneID" id="9956"/>
<dbReference type="KEGG" id="hsa:9956"/>
<dbReference type="MANE-Select" id="ENST00000261374.4">
    <property type="protein sequence ID" value="ENSP00000261374.3"/>
    <property type="RefSeq nucleotide sequence ID" value="NM_006043.2"/>
    <property type="RefSeq protein sequence ID" value="NP_006034.1"/>
</dbReference>
<dbReference type="UCSC" id="uc002dli.4">
    <property type="organism name" value="human"/>
</dbReference>
<dbReference type="AGR" id="HGNC:5195"/>
<dbReference type="CTD" id="9956"/>
<dbReference type="DisGeNET" id="9956"/>
<dbReference type="GeneCards" id="HS3ST2"/>
<dbReference type="HGNC" id="HGNC:5195">
    <property type="gene designation" value="HS3ST2"/>
</dbReference>
<dbReference type="HPA" id="ENSG00000122254">
    <property type="expression patterns" value="Group enriched (brain, lung)"/>
</dbReference>
<dbReference type="MIM" id="604056">
    <property type="type" value="gene"/>
</dbReference>
<dbReference type="neXtProt" id="NX_Q9Y278"/>
<dbReference type="OpenTargets" id="ENSG00000122254"/>
<dbReference type="PharmGKB" id="PA29468"/>
<dbReference type="VEuPathDB" id="HostDB:ENSG00000122254"/>
<dbReference type="eggNOG" id="KOG3704">
    <property type="taxonomic scope" value="Eukaryota"/>
</dbReference>
<dbReference type="GeneTree" id="ENSGT00940000160498"/>
<dbReference type="HOGENOM" id="CLU_017703_0_0_1"/>
<dbReference type="InParanoid" id="Q9Y278"/>
<dbReference type="OMA" id="NIIFYRG"/>
<dbReference type="OrthoDB" id="411451at2759"/>
<dbReference type="PAN-GO" id="Q9Y278">
    <property type="GO annotations" value="1 GO annotation based on evolutionary models"/>
</dbReference>
<dbReference type="PhylomeDB" id="Q9Y278"/>
<dbReference type="TreeFam" id="TF350755"/>
<dbReference type="BioCyc" id="MetaCyc:HS04557-MONOMER"/>
<dbReference type="BRENDA" id="2.8.2.29">
    <property type="organism ID" value="2681"/>
</dbReference>
<dbReference type="PathwayCommons" id="Q9Y278"/>
<dbReference type="Reactome" id="R-HSA-2022928">
    <property type="pathway name" value="HS-GAG biosynthesis"/>
</dbReference>
<dbReference type="SignaLink" id="Q9Y278"/>
<dbReference type="BioGRID-ORCS" id="9956">
    <property type="hits" value="7 hits in 1138 CRISPR screens"/>
</dbReference>
<dbReference type="ChiTaRS" id="HS3ST2">
    <property type="organism name" value="human"/>
</dbReference>
<dbReference type="GeneWiki" id="HS3ST2"/>
<dbReference type="GenomeRNAi" id="9956"/>
<dbReference type="Pharos" id="Q9Y278">
    <property type="development level" value="Tbio"/>
</dbReference>
<dbReference type="PRO" id="PR:Q9Y278"/>
<dbReference type="Proteomes" id="UP000005640">
    <property type="component" value="Chromosome 16"/>
</dbReference>
<dbReference type="RNAct" id="Q9Y278">
    <property type="molecule type" value="protein"/>
</dbReference>
<dbReference type="Bgee" id="ENSG00000122254">
    <property type="expression patterns" value="Expressed in Brodmann (1909) area 46 and 129 other cell types or tissues"/>
</dbReference>
<dbReference type="ExpressionAtlas" id="Q9Y278">
    <property type="expression patterns" value="baseline and differential"/>
</dbReference>
<dbReference type="GO" id="GO:0000139">
    <property type="term" value="C:Golgi membrane"/>
    <property type="evidence" value="ECO:0000304"/>
    <property type="project" value="Reactome"/>
</dbReference>
<dbReference type="GO" id="GO:0016020">
    <property type="term" value="C:membrane"/>
    <property type="evidence" value="ECO:0000304"/>
    <property type="project" value="ProtInc"/>
</dbReference>
<dbReference type="GO" id="GO:0008467">
    <property type="term" value="F:[heparan sulfate]-glucosamine 3-sulfotransferase activity"/>
    <property type="evidence" value="ECO:0000314"/>
    <property type="project" value="UniProtKB"/>
</dbReference>
<dbReference type="GO" id="GO:0008146">
    <property type="term" value="F:sulfotransferase activity"/>
    <property type="evidence" value="ECO:0000304"/>
    <property type="project" value="ProtInc"/>
</dbReference>
<dbReference type="GO" id="GO:0006024">
    <property type="term" value="P:glycosaminoglycan biosynthetic process"/>
    <property type="evidence" value="ECO:0000314"/>
    <property type="project" value="UniProtKB"/>
</dbReference>
<dbReference type="GO" id="GO:0015012">
    <property type="term" value="P:heparan sulfate proteoglycan biosynthetic process"/>
    <property type="evidence" value="ECO:0007669"/>
    <property type="project" value="Ensembl"/>
</dbReference>
<dbReference type="FunFam" id="3.40.50.300:FF:000194">
    <property type="entry name" value="Sulfotransferase"/>
    <property type="match status" value="1"/>
</dbReference>
<dbReference type="Gene3D" id="3.40.50.300">
    <property type="entry name" value="P-loop containing nucleotide triphosphate hydrolases"/>
    <property type="match status" value="1"/>
</dbReference>
<dbReference type="InterPro" id="IPR037359">
    <property type="entry name" value="NST/OST"/>
</dbReference>
<dbReference type="InterPro" id="IPR027417">
    <property type="entry name" value="P-loop_NTPase"/>
</dbReference>
<dbReference type="InterPro" id="IPR000863">
    <property type="entry name" value="Sulfotransferase_dom"/>
</dbReference>
<dbReference type="PANTHER" id="PTHR10605:SF10">
    <property type="entry name" value="HEPARAN SULFATE GLUCOSAMINE 3-O-SULFOTRANSFERASE 2"/>
    <property type="match status" value="1"/>
</dbReference>
<dbReference type="PANTHER" id="PTHR10605">
    <property type="entry name" value="HEPARAN SULFATE SULFOTRANSFERASE"/>
    <property type="match status" value="1"/>
</dbReference>
<dbReference type="Pfam" id="PF00685">
    <property type="entry name" value="Sulfotransfer_1"/>
    <property type="match status" value="1"/>
</dbReference>
<dbReference type="SUPFAM" id="SSF52540">
    <property type="entry name" value="P-loop containing nucleoside triphosphate hydrolases"/>
    <property type="match status" value="1"/>
</dbReference>
<reference key="1">
    <citation type="journal article" date="1999" name="J. Biol. Chem.">
        <title>Multiple isoforms of heparan sulfate D-glucosaminyl 3-O-sulfotransferase. Isolation, characterization, and expression of human cDNAs and identification of distinct genomic loci.</title>
        <authorList>
            <person name="Shworak N.W."/>
            <person name="Liu J."/>
            <person name="Petros L.M."/>
            <person name="Zhang L."/>
            <person name="Kobayashi M."/>
            <person name="Copeland N.G."/>
            <person name="Jenkins N.A."/>
            <person name="Rosenberg R.D."/>
        </authorList>
    </citation>
    <scope>NUCLEOTIDE SEQUENCE [MRNA]</scope>
    <scope>TISSUE SPECIFICITY</scope>
    <source>
        <tissue>Brain</tissue>
    </source>
</reference>
<reference key="2">
    <citation type="journal article" date="2003" name="Genome Res.">
        <title>The secreted protein discovery initiative (SPDI), a large-scale effort to identify novel human secreted and transmembrane proteins: a bioinformatics assessment.</title>
        <authorList>
            <person name="Clark H.F."/>
            <person name="Gurney A.L."/>
            <person name="Abaya E."/>
            <person name="Baker K."/>
            <person name="Baldwin D.T."/>
            <person name="Brush J."/>
            <person name="Chen J."/>
            <person name="Chow B."/>
            <person name="Chui C."/>
            <person name="Crowley C."/>
            <person name="Currell B."/>
            <person name="Deuel B."/>
            <person name="Dowd P."/>
            <person name="Eaton D."/>
            <person name="Foster J.S."/>
            <person name="Grimaldi C."/>
            <person name="Gu Q."/>
            <person name="Hass P.E."/>
            <person name="Heldens S."/>
            <person name="Huang A."/>
            <person name="Kim H.S."/>
            <person name="Klimowski L."/>
            <person name="Jin Y."/>
            <person name="Johnson S."/>
            <person name="Lee J."/>
            <person name="Lewis L."/>
            <person name="Liao D."/>
            <person name="Mark M.R."/>
            <person name="Robbie E."/>
            <person name="Sanchez C."/>
            <person name="Schoenfeld J."/>
            <person name="Seshagiri S."/>
            <person name="Simmons L."/>
            <person name="Singh J."/>
            <person name="Smith V."/>
            <person name="Stinson J."/>
            <person name="Vagts A."/>
            <person name="Vandlen R.L."/>
            <person name="Watanabe C."/>
            <person name="Wieand D."/>
            <person name="Woods K."/>
            <person name="Xie M.-H."/>
            <person name="Yansura D.G."/>
            <person name="Yi S."/>
            <person name="Yu G."/>
            <person name="Yuan J."/>
            <person name="Zhang M."/>
            <person name="Zhang Z."/>
            <person name="Goddard A.D."/>
            <person name="Wood W.I."/>
            <person name="Godowski P.J."/>
            <person name="Gray A.M."/>
        </authorList>
    </citation>
    <scope>NUCLEOTIDE SEQUENCE [LARGE SCALE MRNA]</scope>
</reference>
<reference key="3">
    <citation type="journal article" date="2004" name="Genome Res.">
        <title>The status, quality, and expansion of the NIH full-length cDNA project: the Mammalian Gene Collection (MGC).</title>
        <authorList>
            <consortium name="The MGC Project Team"/>
        </authorList>
    </citation>
    <scope>NUCLEOTIDE SEQUENCE [LARGE SCALE MRNA]</scope>
    <source>
        <tissue>Brain</tissue>
    </source>
</reference>
<reference key="4">
    <citation type="journal article" date="1999" name="J. Biol. Chem.">
        <title>Expression of heparan sulfate D-glucosaminyl 3-O-sulfotransferase isoforms reveals novel substrate specificities.</title>
        <authorList>
            <person name="Liu J."/>
            <person name="Shworak N.W."/>
            <person name="Sinay P."/>
            <person name="Schwartz J.J."/>
            <person name="Zhang L."/>
            <person name="Fritze L.M.S."/>
            <person name="Rosenberg R.D."/>
        </authorList>
    </citation>
    <scope>FUNCTION</scope>
    <scope>CATALYTIC ACTIVITY</scope>
</reference>